<sequence length="1213" mass="134555">MDLLGDQHFAAQQPPLFDATPSSLKEDAEELIAETIAAWDSIVSQIQTENATFQNTISPIIQDENVKSQKQRVLTFYSSTSPSKDLRDASTAVGRLFNDAEIELYSRQDMFERVDQVLQQQDKQVVASLDEESLYYIQKLHRRFHQNGCGIAEEGQRVTFKTKMKRLGHLVQQCNKNLNEDKSGVWLGLDELDGIPQSLISRLKQGDGENSDHLWLPTKVPFSSPAITNAKSEATRKRIYCAIQNRMEMNVPLFREIVLLRDETARLLGYADHATLKTADKMMQTPQAVEALLSEIRTAVAPLAAQDVEELLEIKRNEAESRGTTADELYFWDLAYYSARRGEAEKKISSSISEYFELNTTLAKLLSIIEHLFGTRFRRVNAAGRDEAAGSLIWHKDVQMYSVWNVDGPKEFLGLFLASSALVMNYVRPTDTRPTLLSLDEVRKLFHEIGHLLHSQWTQTKYAALHHVDRDFVEAPSMMLEQFFWVEQHIKDVSFHYSHIDSKMKDMWKATLVDQDDTNPPEKPAQLSDDVVFNLARANQSKAIQGQLKEVFFATYDMLVHKPASRAALEALNLTELFNKTRSDVYKVRGGEALGGGWEWGHGQTVFRNILNRYDAGYYSYLLGRVFAMDIFDTGFKEKTPSREAGRRYRDMVYRVGGRQAEMKTMTDYLGHEPSTHPYLAWLQVFACVVPRDMVPNTAQIGSITTETIVGLLSPVRMAVWGLLPIKWRMTRELSACKQRCLQEDGHLVALEVRLVHSRHTLAAAVGEQRVAAPGSTAYDAALRSYFSVQQAAMQPACVVLPQSDEDVSAAVRCLAQLHQGGGESCRFAVRSGGHTSWAGASNIQHGAVIDLGRSAPSSSRRTSRRSRSGWGPRGAMWVGGLTLGGGLSYTSPRYGWTCDAVSQFQIVLADGSVVAADSKERPSLFRALKGGSNNFGIVTRITFETFRQGPVWSGTVYSLSSTAEAAIDNFVAFNSATSYDEYASVMTSFVYNQARGLPVVANLLQYTKEVTGTPAAFEGFMAVPNIYSSTSVASTLATTQATAALNSGGVRSLTYAVTLVSTKEVIQAAYEKWSTSYPAIKDVRNIIFSLVLEPLPPAIYQRHATTNTLGLADRAGALVVAELSVSWADAGDDALVSSTARALVDDIVAAAKSLGGFDPYIFANYANKDQAQDVIRSYGAESVSFLMQVRHEVDPKGIFTHLVPGGYKIPEH</sequence>
<dbReference type="EC" id="3.4.24.-" evidence="8"/>
<dbReference type="EMBL" id="KU645844">
    <property type="protein sequence ID" value="AMR44292.1"/>
    <property type="molecule type" value="Genomic_DNA"/>
</dbReference>
<dbReference type="SMR" id="A0A142I740"/>
<dbReference type="GO" id="GO:0005758">
    <property type="term" value="C:mitochondrial intermembrane space"/>
    <property type="evidence" value="ECO:0007669"/>
    <property type="project" value="TreeGrafter"/>
</dbReference>
<dbReference type="GO" id="GO:0050660">
    <property type="term" value="F:flavin adenine dinucleotide binding"/>
    <property type="evidence" value="ECO:0007669"/>
    <property type="project" value="InterPro"/>
</dbReference>
<dbReference type="GO" id="GO:0046872">
    <property type="term" value="F:metal ion binding"/>
    <property type="evidence" value="ECO:0007669"/>
    <property type="project" value="UniProtKB-KW"/>
</dbReference>
<dbReference type="GO" id="GO:0004222">
    <property type="term" value="F:metalloendopeptidase activity"/>
    <property type="evidence" value="ECO:0007669"/>
    <property type="project" value="UniProtKB-EC"/>
</dbReference>
<dbReference type="GO" id="GO:0006518">
    <property type="term" value="P:peptide metabolic process"/>
    <property type="evidence" value="ECO:0007669"/>
    <property type="project" value="TreeGrafter"/>
</dbReference>
<dbReference type="GO" id="GO:0006508">
    <property type="term" value="P:proteolysis"/>
    <property type="evidence" value="ECO:0007669"/>
    <property type="project" value="UniProtKB-KW"/>
</dbReference>
<dbReference type="CDD" id="cd06455">
    <property type="entry name" value="M3A_TOP"/>
    <property type="match status" value="1"/>
</dbReference>
<dbReference type="Gene3D" id="3.30.465.10">
    <property type="match status" value="2"/>
</dbReference>
<dbReference type="Gene3D" id="3.40.462.20">
    <property type="match status" value="1"/>
</dbReference>
<dbReference type="Gene3D" id="3.40.390.10">
    <property type="entry name" value="Collagenase (Catalytic Domain)"/>
    <property type="match status" value="2"/>
</dbReference>
<dbReference type="Gene3D" id="1.20.1050.40">
    <property type="entry name" value="Endopeptidase. Chain P, domain 1"/>
    <property type="match status" value="1"/>
</dbReference>
<dbReference type="Gene3D" id="1.10.1370.10">
    <property type="entry name" value="Neurolysin, domain 3"/>
    <property type="match status" value="2"/>
</dbReference>
<dbReference type="InterPro" id="IPR036318">
    <property type="entry name" value="FAD-bd_PCMH-like_sf"/>
</dbReference>
<dbReference type="InterPro" id="IPR016169">
    <property type="entry name" value="FAD-bd_PCMH_sub2"/>
</dbReference>
<dbReference type="InterPro" id="IPR024079">
    <property type="entry name" value="MetalloPept_cat_dom_sf"/>
</dbReference>
<dbReference type="InterPro" id="IPR024077">
    <property type="entry name" value="Neurolysin/TOP_dom2"/>
</dbReference>
<dbReference type="InterPro" id="IPR024080">
    <property type="entry name" value="Neurolysin/TOP_N"/>
</dbReference>
<dbReference type="InterPro" id="IPR045090">
    <property type="entry name" value="Pept_M3A_M3B"/>
</dbReference>
<dbReference type="InterPro" id="IPR001567">
    <property type="entry name" value="Pept_M3A_M3B_dom"/>
</dbReference>
<dbReference type="PANTHER" id="PTHR11804">
    <property type="entry name" value="PROTEASE M3 THIMET OLIGOPEPTIDASE-RELATED"/>
    <property type="match status" value="1"/>
</dbReference>
<dbReference type="PANTHER" id="PTHR11804:SF84">
    <property type="entry name" value="SACCHAROLYSIN"/>
    <property type="match status" value="1"/>
</dbReference>
<dbReference type="Pfam" id="PF01432">
    <property type="entry name" value="Peptidase_M3"/>
    <property type="match status" value="2"/>
</dbReference>
<dbReference type="SUPFAM" id="SSF56176">
    <property type="entry name" value="FAD-binding/transporter-associated domain-like"/>
    <property type="match status" value="1"/>
</dbReference>
<dbReference type="SUPFAM" id="SSF55486">
    <property type="entry name" value="Metalloproteases ('zincins'), catalytic domain"/>
    <property type="match status" value="1"/>
</dbReference>
<reference key="1">
    <citation type="journal article" date="2016" name="Proc. Natl. Acad. Sci. U.S.A.">
        <title>Biosynthetic investigation of phomopsins reveals a widespread pathway for ribosomal natural products in Ascomycetes.</title>
        <authorList>
            <person name="Ding W."/>
            <person name="Liu W.Q."/>
            <person name="Jia Y."/>
            <person name="Li Y."/>
            <person name="van der Donk W.A."/>
            <person name="Zhang Q."/>
        </authorList>
    </citation>
    <scope>NUCLEOTIDE SEQUENCE [GENOMIC DNA]</scope>
    <scope>FUNCTION</scope>
    <source>
        <strain>ATCC 26115 / IMI 115107 / C 1557</strain>
    </source>
</reference>
<reference key="2">
    <citation type="journal article" date="2021" name="Angew. Chem. Int. Ed.">
        <title>Biosynthetic studies of phomopsins unveil posttranslational installation of dehydroamino acids by ustYa family proteins.</title>
        <authorList>
            <person name="Sogahata K."/>
            <person name="Ozaki T."/>
            <person name="Igarashi Y."/>
            <person name="Naganuma Y."/>
            <person name="Liu C."/>
            <person name="Minami A."/>
            <person name="Oikawa H."/>
        </authorList>
    </citation>
    <scope>NOMENCLATURE</scope>
    <scope>FUNCTION</scope>
    <source>
        <strain>ATCC 26115 / IMI 115107 / C 1557</strain>
    </source>
</reference>
<proteinExistence type="inferred from homology"/>
<protein>
    <recommendedName>
        <fullName evidence="6">Oligopeptidase PhomG'</fullName>
        <ecNumber evidence="8">3.4.24.-</ecNumber>
    </recommendedName>
    <alternativeName>
        <fullName evidence="6">Phomopsin biosynthesis cluster protein G'</fullName>
    </alternativeName>
</protein>
<gene>
    <name evidence="6" type="primary">PhomG'</name>
    <name evidence="5" type="synonym">PhomG</name>
</gene>
<keyword id="KW-0378">Hydrolase</keyword>
<keyword id="KW-0479">Metal-binding</keyword>
<keyword id="KW-0482">Metalloprotease</keyword>
<keyword id="KW-0645">Protease</keyword>
<keyword id="KW-0843">Virulence</keyword>
<keyword id="KW-0862">Zinc</keyword>
<feature type="chain" id="PRO_0000458391" description="Oligopeptidase PhomG'">
    <location>
        <begin position="1"/>
        <end position="1213"/>
    </location>
</feature>
<feature type="active site" evidence="2">
    <location>
        <position position="448"/>
    </location>
</feature>
<feature type="binding site" evidence="2">
    <location>
        <position position="447"/>
    </location>
    <ligand>
        <name>Zn(2+)</name>
        <dbReference type="ChEBI" id="CHEBI:29105"/>
        <note>catalytic</note>
    </ligand>
</feature>
<feature type="binding site" evidence="2">
    <location>
        <position position="451"/>
    </location>
    <ligand>
        <name>Zn(2+)</name>
        <dbReference type="ChEBI" id="CHEBI:29105"/>
        <note>catalytic</note>
    </ligand>
</feature>
<feature type="binding site" evidence="2">
    <location>
        <position position="454"/>
    </location>
    <ligand>
        <name>Zn(2+)</name>
        <dbReference type="ChEBI" id="CHEBI:29105"/>
        <note>catalytic</note>
    </ligand>
</feature>
<name>PHOG2_DIALO</name>
<accession>A0A142I740</accession>
<comment type="function">
    <text evidence="3 4 8">Oligopeptidase; part of the gene cluster that mediates the biosynthesis of the phomopsins, a group of hexapeptide mycotoxins which infects lupins and causes lupinosis disease in livestock (PubMed:26979951, PubMed:34608734). Within the pathway, phomG and phomG' are probably involved in the processing of the phomA and phomA' precursors (Probable). The pathway starts with the processing of the precursor phomA by several endopeptidases including kexin proteases as well as the cluster-specific S41 family peptidase phomP1 and the oligopeptidase phomG to produce 10 identical copies of the hexapeptide Tyr-Val-Ile-Pro-Ile-Asp. After being excised from the precursor peptide, the core peptides are cyclized and modified post-translationally by enzymes encoded within the gene cluster. The timing and order of proteolysis of the phomA precursor and PTMs are still unknown. Two tyrosinase-like enzymes, phomQ1 and phomQ2, catalyze the chlorination and hydroxylation of Tyr, respectively. PhomYb, is proposed to be involved in the construction of the macrocyclic structure. The other 4 ustYa family proteins may be involved in PTMs that generate the unique structure of phomopsin A. PhomYa is required for the hydroxylation of C-beta of Tyr. PhomYc, phomYd, and phomYe are responsible for the biosynthesis of 2,3-dehydroisoleucine (dIle), 2,3-dehydroaspartic acid (dAsp), and 3,4-dehydroproline (dPro), respectively. While dIle formation by phomYc is indispensable for the installation of dAsp by phomYd, the order of the other PTMs have not been elucidated yet. Most of the biosynthetic enzymes likely have broad substrate specificity, and thus, there might be a metabolic grid from a precursor to phomopsin A. The enzyme(s) responsible for the biosynthesis of 3,4-dehydrovaline (dVal) have also not been identified yet. Finally, phomM acts as an S-adenosylmethionine-dependent alpha-N-methyltransferase that catalyzes two successive N-methylation reactions, converting N-desmethyl-phomopsin A to phomopsin A and phomopsin A further to an N,N-dimethylated congener called phomopsin E (Probable).</text>
</comment>
<comment type="cofactor">
    <cofactor evidence="2">
        <name>Zn(2+)</name>
        <dbReference type="ChEBI" id="CHEBI:29105"/>
    </cofactor>
    <text evidence="2">Binds 1 zinc ion per subunit.</text>
</comment>
<comment type="pathway">
    <text evidence="8">Mycotoxin biosynthesis.</text>
</comment>
<comment type="subunit">
    <text evidence="1">Monomer.</text>
</comment>
<comment type="similarity">
    <text evidence="7">Belongs to the peptidase M3 family.</text>
</comment>
<organism>
    <name type="scientific">Diaporthe leptostromiformis</name>
    <name type="common">Lupinosis disease fungus</name>
    <name type="synonym">Phomopsis leptostromiformis</name>
    <dbReference type="NCBI Taxonomy" id="291059"/>
    <lineage>
        <taxon>Eukaryota</taxon>
        <taxon>Fungi</taxon>
        <taxon>Dikarya</taxon>
        <taxon>Ascomycota</taxon>
        <taxon>Pezizomycotina</taxon>
        <taxon>Sordariomycetes</taxon>
        <taxon>Sordariomycetidae</taxon>
        <taxon>Diaporthales</taxon>
        <taxon>Diaporthaceae</taxon>
        <taxon>Diaporthe</taxon>
    </lineage>
</organism>
<evidence type="ECO:0000250" key="1">
    <source>
        <dbReference type="UniProtKB" id="P47788"/>
    </source>
</evidence>
<evidence type="ECO:0000250" key="2">
    <source>
        <dbReference type="UniProtKB" id="P52888"/>
    </source>
</evidence>
<evidence type="ECO:0000269" key="3">
    <source>
    </source>
</evidence>
<evidence type="ECO:0000269" key="4">
    <source>
    </source>
</evidence>
<evidence type="ECO:0000303" key="5">
    <source>
    </source>
</evidence>
<evidence type="ECO:0000303" key="6">
    <source>
    </source>
</evidence>
<evidence type="ECO:0000305" key="7"/>
<evidence type="ECO:0000305" key="8">
    <source>
    </source>
</evidence>